<dbReference type="EMBL" id="AE016819">
    <property type="protein sequence ID" value="AAS54086.1"/>
    <property type="molecule type" value="Genomic_DNA"/>
</dbReference>
<dbReference type="RefSeq" id="NP_986262.1">
    <property type="nucleotide sequence ID" value="NM_212398.1"/>
</dbReference>
<dbReference type="FunCoup" id="Q751W1">
    <property type="interactions" value="38"/>
</dbReference>
<dbReference type="STRING" id="284811.Q751W1"/>
<dbReference type="GlyCosmos" id="Q751W1">
    <property type="glycosylation" value="2 sites, No reported glycans"/>
</dbReference>
<dbReference type="EnsemblFungi" id="AAS54086">
    <property type="protein sequence ID" value="AAS54086"/>
    <property type="gene ID" value="AGOS_AFR714W"/>
</dbReference>
<dbReference type="GeneID" id="4622551"/>
<dbReference type="KEGG" id="ago:AGOS_AFR714W"/>
<dbReference type="eggNOG" id="ENOG502QR9I">
    <property type="taxonomic scope" value="Eukaryota"/>
</dbReference>
<dbReference type="HOGENOM" id="CLU_017518_1_0_1"/>
<dbReference type="InParanoid" id="Q751W1"/>
<dbReference type="OMA" id="QPWEIFP"/>
<dbReference type="OrthoDB" id="42657at2759"/>
<dbReference type="Proteomes" id="UP000000591">
    <property type="component" value="Chromosome VI"/>
</dbReference>
<dbReference type="GO" id="GO:0000329">
    <property type="term" value="C:fungal-type vacuole membrane"/>
    <property type="evidence" value="ECO:0007669"/>
    <property type="project" value="EnsemblFungi"/>
</dbReference>
<dbReference type="GO" id="GO:0032974">
    <property type="term" value="P:amino acid transmembrane export from vacuole"/>
    <property type="evidence" value="ECO:0000318"/>
    <property type="project" value="GO_Central"/>
</dbReference>
<dbReference type="GO" id="GO:0006914">
    <property type="term" value="P:autophagy"/>
    <property type="evidence" value="ECO:0007669"/>
    <property type="project" value="UniProtKB-KW"/>
</dbReference>
<dbReference type="CDD" id="cd17483">
    <property type="entry name" value="MFS_Atg22_like"/>
    <property type="match status" value="1"/>
</dbReference>
<dbReference type="FunFam" id="1.20.1250.20:FF:001085">
    <property type="entry name" value="Autophagy-related protein 22"/>
    <property type="match status" value="1"/>
</dbReference>
<dbReference type="Gene3D" id="1.20.1250.20">
    <property type="entry name" value="MFS general substrate transporter like domains"/>
    <property type="match status" value="1"/>
</dbReference>
<dbReference type="InterPro" id="IPR044738">
    <property type="entry name" value="Atg22"/>
</dbReference>
<dbReference type="InterPro" id="IPR024671">
    <property type="entry name" value="Atg22-like"/>
</dbReference>
<dbReference type="InterPro" id="IPR050495">
    <property type="entry name" value="ATG22/LtaA_families"/>
</dbReference>
<dbReference type="InterPro" id="IPR036259">
    <property type="entry name" value="MFS_trans_sf"/>
</dbReference>
<dbReference type="PANTHER" id="PTHR23519">
    <property type="entry name" value="AUTOPHAGY-RELATED PROTEIN 22"/>
    <property type="match status" value="1"/>
</dbReference>
<dbReference type="PANTHER" id="PTHR23519:SF1">
    <property type="entry name" value="AUTOPHAGY-RELATED PROTEIN 22"/>
    <property type="match status" value="1"/>
</dbReference>
<dbReference type="Pfam" id="PF11700">
    <property type="entry name" value="ATG22"/>
    <property type="match status" value="1"/>
</dbReference>
<dbReference type="SUPFAM" id="SSF103473">
    <property type="entry name" value="MFS general substrate transporter"/>
    <property type="match status" value="1"/>
</dbReference>
<proteinExistence type="inferred from homology"/>
<gene>
    <name type="primary">ATG22</name>
    <name type="ordered locus">AFR714W</name>
</gene>
<reference key="1">
    <citation type="journal article" date="2004" name="Science">
        <title>The Ashbya gossypii genome as a tool for mapping the ancient Saccharomyces cerevisiae genome.</title>
        <authorList>
            <person name="Dietrich F.S."/>
            <person name="Voegeli S."/>
            <person name="Brachat S."/>
            <person name="Lerch A."/>
            <person name="Gates K."/>
            <person name="Steiner S."/>
            <person name="Mohr C."/>
            <person name="Poehlmann R."/>
            <person name="Luedi P."/>
            <person name="Choi S."/>
            <person name="Wing R.A."/>
            <person name="Flavier A."/>
            <person name="Gaffney T.D."/>
            <person name="Philippsen P."/>
        </authorList>
    </citation>
    <scope>NUCLEOTIDE SEQUENCE [LARGE SCALE GENOMIC DNA]</scope>
    <source>
        <strain>ATCC 10895 / CBS 109.51 / FGSC 9923 / NRRL Y-1056</strain>
    </source>
</reference>
<reference key="2">
    <citation type="journal article" date="2013" name="G3 (Bethesda)">
        <title>Genomes of Ashbya fungi isolated from insects reveal four mating-type loci, numerous translocations, lack of transposons, and distinct gene duplications.</title>
        <authorList>
            <person name="Dietrich F.S."/>
            <person name="Voegeli S."/>
            <person name="Kuo S."/>
            <person name="Philippsen P."/>
        </authorList>
    </citation>
    <scope>GENOME REANNOTATION</scope>
    <source>
        <strain>ATCC 10895 / CBS 109.51 / FGSC 9923 / NRRL Y-1056</strain>
    </source>
</reference>
<accession>Q751W1</accession>
<keyword id="KW-0029">Amino-acid transport</keyword>
<keyword id="KW-0072">Autophagy</keyword>
<keyword id="KW-0325">Glycoprotein</keyword>
<keyword id="KW-0472">Membrane</keyword>
<keyword id="KW-1185">Reference proteome</keyword>
<keyword id="KW-0812">Transmembrane</keyword>
<keyword id="KW-1133">Transmembrane helix</keyword>
<keyword id="KW-0813">Transport</keyword>
<keyword id="KW-0926">Vacuole</keyword>
<organism>
    <name type="scientific">Eremothecium gossypii (strain ATCC 10895 / CBS 109.51 / FGSC 9923 / NRRL Y-1056)</name>
    <name type="common">Yeast</name>
    <name type="synonym">Ashbya gossypii</name>
    <dbReference type="NCBI Taxonomy" id="284811"/>
    <lineage>
        <taxon>Eukaryota</taxon>
        <taxon>Fungi</taxon>
        <taxon>Dikarya</taxon>
        <taxon>Ascomycota</taxon>
        <taxon>Saccharomycotina</taxon>
        <taxon>Saccharomycetes</taxon>
        <taxon>Saccharomycetales</taxon>
        <taxon>Saccharomycetaceae</taxon>
        <taxon>Eremothecium</taxon>
    </lineage>
</organism>
<protein>
    <recommendedName>
        <fullName>Autophagy-related protein 22</fullName>
    </recommendedName>
</protein>
<evidence type="ECO:0000250" key="1"/>
<evidence type="ECO:0000255" key="2"/>
<evidence type="ECO:0000305" key="3"/>
<comment type="function">
    <text evidence="1">Vacuolar effluxer which mediate the efflux of amino acids resulting from autophagic degradation. The release of autophagic amino acids allows the maintenance of protein synthesis and viability during nitrogen starvation (By similarity).</text>
</comment>
<comment type="subcellular location">
    <subcellularLocation>
        <location evidence="1">Vacuole membrane</location>
        <topology evidence="1">Multi-pass membrane protein</topology>
    </subcellularLocation>
    <text evidence="1">Vacuole and punctate structures.</text>
</comment>
<comment type="similarity">
    <text evidence="3">Belongs to the ATG22 family.</text>
</comment>
<feature type="chain" id="PRO_0000207616" description="Autophagy-related protein 22">
    <location>
        <begin position="1"/>
        <end position="507"/>
    </location>
</feature>
<feature type="transmembrane region" description="Helical" evidence="2">
    <location>
        <begin position="24"/>
        <end position="44"/>
    </location>
</feature>
<feature type="transmembrane region" description="Helical" evidence="2">
    <location>
        <begin position="90"/>
        <end position="110"/>
    </location>
</feature>
<feature type="transmembrane region" description="Helical" evidence="2">
    <location>
        <begin position="126"/>
        <end position="146"/>
    </location>
</feature>
<feature type="transmembrane region" description="Helical" evidence="2">
    <location>
        <begin position="150"/>
        <end position="170"/>
    </location>
</feature>
<feature type="transmembrane region" description="Helical" evidence="2">
    <location>
        <begin position="203"/>
        <end position="223"/>
    </location>
</feature>
<feature type="transmembrane region" description="Helical" evidence="2">
    <location>
        <begin position="234"/>
        <end position="254"/>
    </location>
</feature>
<feature type="transmembrane region" description="Helical" evidence="2">
    <location>
        <begin position="295"/>
        <end position="315"/>
    </location>
</feature>
<feature type="transmembrane region" description="Helical" evidence="2">
    <location>
        <begin position="329"/>
        <end position="349"/>
    </location>
</feature>
<feature type="transmembrane region" description="Helical" evidence="2">
    <location>
        <begin position="365"/>
        <end position="385"/>
    </location>
</feature>
<feature type="transmembrane region" description="Helical" evidence="2">
    <location>
        <begin position="393"/>
        <end position="413"/>
    </location>
</feature>
<feature type="transmembrane region" description="Helical" evidence="2">
    <location>
        <begin position="433"/>
        <end position="453"/>
    </location>
</feature>
<feature type="transmembrane region" description="Helical" evidence="2">
    <location>
        <begin position="462"/>
        <end position="482"/>
    </location>
</feature>
<feature type="glycosylation site" description="N-linked (GlcNAc...) asparagine" evidence="2">
    <location>
        <position position="262"/>
    </location>
</feature>
<feature type="glycosylation site" description="N-linked (GlcNAc...) asparagine" evidence="2">
    <location>
        <position position="496"/>
    </location>
</feature>
<name>ATG22_EREGS</name>
<sequence>MSYETIPTSDENFDRDVSATNRNVFGWYLYAFSSEPFIVSAMSTYFPLLLEEFARNNGVQVDDHTVACGAEDKHCVLPLFGRRVFVDTSSFALYTFALGVLLQTVLVISVSGVVDVCKTVRFKRNVLLSFGMVGGLATCSTVLLRGNQYYILALLTVISNCCYGVINVVGNSLLPDVVSDLKRVLYLYRVIDSDQLTTVISGRGSGIGYIAAFVVQLCSVWLLRQPEYRDDIRVAVLLVGGWWMLFQLPLIWMLDDVVVRENSTQFKWSRSRQYLKAGWQSLGHAAMHANLLKDVLIFLVGWFIISDSITTINSAAILFSKTELHMSTVNLVVISILTMINAVIGAYFVPQLLSERLELPPHQSLIYLICWAGVIPFYGTLGFVFQSIGLKHPFEMYILAVWYGISMGGLAAVSRSVFSLLIPRGKESTFFSLFSITDKGSSVVGPLLIGLITDKTHNIRYSFYFLFLFVVASIPVFNALNVQRGKVEAEELAGINESRLETNDGFA</sequence>